<gene>
    <name evidence="5" type="primary">CTB9</name>
    <name type="ORF">CB0940_00842</name>
</gene>
<sequence>MTSTITTTETLQDAVPFVAPPSPPEDTSNKELPEKPYYDVEFNYRLDPRDGGDEVIWGGTVGLMRRKYETRTVRINNERGNEHNFNLDTHGFAWVKHKTSVTEFADYLAIRQGPYFGEVAEMLKRVTGATKVHVIGHLHRSLNYNDTTEEEKNAPDMTMTKGQTPGRFVHVDQSYQGAVRRLYLDLPQEEARRLEKTRWAIINVWRPVRKVTNEPLAVCDARSVREDELFNTLHLVPMRWPDAAPQENQMWAVAPPKTPTQHKWHYVSGMTEDEALLIKMFDSKKDGTARRVPHSSFPTPDDFGEPRASTETRCFVFWEDQEAE</sequence>
<evidence type="ECO:0000250" key="1">
    <source>
        <dbReference type="UniProtKB" id="Q0UHZ9"/>
    </source>
</evidence>
<evidence type="ECO:0000256" key="2">
    <source>
        <dbReference type="SAM" id="MobiDB-lite"/>
    </source>
</evidence>
<evidence type="ECO:0000269" key="3">
    <source>
    </source>
</evidence>
<evidence type="ECO:0000303" key="4">
    <source>
    </source>
</evidence>
<evidence type="ECO:0000303" key="5">
    <source>
    </source>
</evidence>
<evidence type="ECO:0000305" key="6"/>
<evidence type="ECO:0000305" key="7">
    <source>
    </source>
</evidence>
<evidence type="ECO:0007829" key="8">
    <source>
        <dbReference type="PDB" id="7EUU"/>
    </source>
</evidence>
<organism>
    <name type="scientific">Cercospora beticola</name>
    <name type="common">Sugarbeet leaf spot fungus</name>
    <dbReference type="NCBI Taxonomy" id="122368"/>
    <lineage>
        <taxon>Eukaryota</taxon>
        <taxon>Fungi</taxon>
        <taxon>Dikarya</taxon>
        <taxon>Ascomycota</taxon>
        <taxon>Pezizomycotina</taxon>
        <taxon>Dothideomycetes</taxon>
        <taxon>Dothideomycetidae</taxon>
        <taxon>Mycosphaerellales</taxon>
        <taxon>Mycosphaerellaceae</taxon>
        <taxon>Cercospora</taxon>
    </lineage>
</organism>
<proteinExistence type="evidence at protein level"/>
<keyword id="KW-0002">3D-structure</keyword>
<keyword id="KW-0560">Oxidoreductase</keyword>
<comment type="function">
    <text evidence="1 3 4 7">Hydroxylase/desaturase; part of the gene cluster that mediates the biosynthesis of cercosporin, a light-activated, non-host-selective toxin (PubMed:29844193). The perylenequinone chromophore of cercosporin absorbs light energy to attain an electronically-activated triplet state and produces active oxygen species such as the hydroxyl radical, superoxide, hydrogen peroxide or singlet oxygen upon reaction with oxygen molecules (PubMed:11701851). These reactive oxygen species cause damage to various cellular components including lipids, proteins and nucleic acids (PubMed:11701851). The first step of cercosporin biosynthesis is performed by the polyketide synthase CTB1 which catalyzes the formation of nor-toralactone (Probable). The starter unit acyltransferase (SAT) domain of CTB1 initiates polyketide extension by the selective utilization of acetyl-CoA, which is elongated to the heptaketide in the beta-ketoacyl synthase (KS) domain by successive condensations with six malonyl units introduced by the malonyl acyltransferase (MAT) domain. The product template (PT) domain catalyzes C4-C9 and C2-C11 aldol cyclizations and dehydrations to a trihydroxynaphthalene, which is thought to be delivered to the thioesterase (TE) domain for product release (Probable). The bifunctional enzyme CTB3 then methylates nor-toralactone to toralactone before conducting an unusual oxidative aromatic ring opening (Probable). The O-methyltransferase CTB2 further methylates the nascent OH-6 of the CBT3 product, blocking further oxidation at this site before the reductase CTB6 reduces the 2-oxopropyl ketone at position C7, giving naphthalene (Probable). The FAD-dependent monooxygenase CTB5 in concert with the multicopper oxidase CTB12 are responsible for homodimerization of naphthalene with CTB7 installing the dioxepine moiety, finally producing cercosporin (Probable). The fasciclin domain-containing protein CTB11 might act with CTB5 and CTB12 whereas the roles of CTB9 and CTB10 have still to be elucidated (By similarity).</text>
</comment>
<comment type="pathway">
    <text evidence="3">Mycotoxin biosynthesis.</text>
</comment>
<comment type="disruption phenotype">
    <text evidence="3">Abolishes the production of cercosporin but accumulates a red, cercosporin-like metabolite called precercosporin.</text>
</comment>
<comment type="similarity">
    <text evidence="6">Belongs to the asaB hydroxylase/desaturase family.</text>
</comment>
<feature type="chain" id="PRO_0000449874" description="Hydroxylase/desaturase CTB9">
    <location>
        <begin position="1"/>
        <end position="324"/>
    </location>
</feature>
<feature type="region of interest" description="Disordered" evidence="2">
    <location>
        <begin position="1"/>
        <end position="33"/>
    </location>
</feature>
<feature type="region of interest" description="Disordered" evidence="2">
    <location>
        <begin position="288"/>
        <end position="308"/>
    </location>
</feature>
<feature type="compositionally biased region" description="Polar residues" evidence="2">
    <location>
        <begin position="1"/>
        <end position="11"/>
    </location>
</feature>
<feature type="strand" evidence="8">
    <location>
        <begin position="37"/>
        <end position="44"/>
    </location>
</feature>
<feature type="helix" evidence="8">
    <location>
        <begin position="48"/>
        <end position="50"/>
    </location>
</feature>
<feature type="strand" evidence="8">
    <location>
        <begin position="54"/>
        <end position="57"/>
    </location>
</feature>
<feature type="helix" evidence="8">
    <location>
        <begin position="62"/>
        <end position="65"/>
    </location>
</feature>
<feature type="strand" evidence="8">
    <location>
        <begin position="69"/>
        <end position="77"/>
    </location>
</feature>
<feature type="helix" evidence="8">
    <location>
        <begin position="82"/>
        <end position="84"/>
    </location>
</feature>
<feature type="turn" evidence="8">
    <location>
        <begin position="87"/>
        <end position="90"/>
    </location>
</feature>
<feature type="strand" evidence="8">
    <location>
        <begin position="91"/>
        <end position="96"/>
    </location>
</feature>
<feature type="helix" evidence="8">
    <location>
        <begin position="107"/>
        <end position="112"/>
    </location>
</feature>
<feature type="helix" evidence="8">
    <location>
        <begin position="115"/>
        <end position="127"/>
    </location>
</feature>
<feature type="strand" evidence="8">
    <location>
        <begin position="130"/>
        <end position="140"/>
    </location>
</feature>
<feature type="helix" evidence="8">
    <location>
        <begin position="144"/>
        <end position="150"/>
    </location>
</feature>
<feature type="turn" evidence="8">
    <location>
        <begin position="151"/>
        <end position="153"/>
    </location>
</feature>
<feature type="strand" evidence="8">
    <location>
        <begin position="170"/>
        <end position="172"/>
    </location>
</feature>
<feature type="helix" evidence="8">
    <location>
        <begin position="175"/>
        <end position="185"/>
    </location>
</feature>
<feature type="helix" evidence="8">
    <location>
        <begin position="188"/>
        <end position="194"/>
    </location>
</feature>
<feature type="strand" evidence="8">
    <location>
        <begin position="197"/>
        <end position="209"/>
    </location>
</feature>
<feature type="strand" evidence="8">
    <location>
        <begin position="216"/>
        <end position="219"/>
    </location>
</feature>
<feature type="helix" evidence="8">
    <location>
        <begin position="221"/>
        <end position="223"/>
    </location>
</feature>
<feature type="helix" evidence="8">
    <location>
        <begin position="226"/>
        <end position="228"/>
    </location>
</feature>
<feature type="strand" evidence="8">
    <location>
        <begin position="229"/>
        <end position="236"/>
    </location>
</feature>
<feature type="turn" evidence="8">
    <location>
        <begin position="238"/>
        <end position="242"/>
    </location>
</feature>
<feature type="strand" evidence="8">
    <location>
        <begin position="246"/>
        <end position="253"/>
    </location>
</feature>
<feature type="turn" evidence="8">
    <location>
        <begin position="259"/>
        <end position="261"/>
    </location>
</feature>
<feature type="strand" evidence="8">
    <location>
        <begin position="264"/>
        <end position="266"/>
    </location>
</feature>
<feature type="strand" evidence="8">
    <location>
        <begin position="274"/>
        <end position="283"/>
    </location>
</feature>
<feature type="strand" evidence="8">
    <location>
        <begin position="286"/>
        <end position="288"/>
    </location>
</feature>
<feature type="strand" evidence="8">
    <location>
        <begin position="294"/>
        <end position="296"/>
    </location>
</feature>
<feature type="strand" evidence="8">
    <location>
        <begin position="309"/>
        <end position="318"/>
    </location>
</feature>
<reference key="1">
    <citation type="journal article" date="2018" name="Proc. Natl. Acad. Sci. U.S.A.">
        <title>Gene cluster conservation provides insight into cercosporin biosynthesis and extends production to the genus Colletotrichum.</title>
        <authorList>
            <person name="de Jonge R."/>
            <person name="Ebert M.K."/>
            <person name="Huitt-Roehl C.R."/>
            <person name="Pal P."/>
            <person name="Suttle J.C."/>
            <person name="Spanner R.E."/>
            <person name="Neubauer J.D."/>
            <person name="Jurick W.M. II"/>
            <person name="Stott K.A."/>
            <person name="Secor G.A."/>
            <person name="Thomma B.P.H.J."/>
            <person name="Van de Peer Y."/>
            <person name="Townsend C.A."/>
            <person name="Bolton M.D."/>
        </authorList>
    </citation>
    <scope>NUCLEOTIDE SEQUENCE [LARGE SCALE GENOMIC DNA]</scope>
    <scope>FUNCTION</scope>
    <scope>DISRUPTION PHENOTYPE</scope>
    <scope>PATHWAY</scope>
    <source>
        <strain>09-40</strain>
    </source>
</reference>
<reference key="2">
    <citation type="journal article" date="2000" name="Annu. Rev. Phytopathol.">
        <title>The photoactivated cercospora toxin cercosporin: contributions to plant disease and fundamental biology.</title>
        <authorList>
            <person name="Daub M.E."/>
            <person name="Ehrenshaft M."/>
        </authorList>
    </citation>
    <scope>REVIEW ON CERCOSPORIN</scope>
</reference>
<accession>A0A2G5I8W0</accession>
<dbReference type="EC" id="1.-.-.-" evidence="7"/>
<dbReference type="EMBL" id="LKMD01000100">
    <property type="protein sequence ID" value="PIB01162.1"/>
    <property type="molecule type" value="Genomic_DNA"/>
</dbReference>
<dbReference type="RefSeq" id="XP_023458823.1">
    <property type="nucleotide sequence ID" value="XM_023593484.1"/>
</dbReference>
<dbReference type="PDB" id="7EUS">
    <property type="method" value="X-ray"/>
    <property type="resolution" value="2.30 A"/>
    <property type="chains" value="A/B=1-324"/>
</dbReference>
<dbReference type="PDB" id="7EUT">
    <property type="method" value="X-ray"/>
    <property type="resolution" value="2.50 A"/>
    <property type="chains" value="A/B=1-324"/>
</dbReference>
<dbReference type="PDB" id="7EUU">
    <property type="method" value="X-ray"/>
    <property type="resolution" value="2.20 A"/>
    <property type="chains" value="A/B=1-324"/>
</dbReference>
<dbReference type="PDBsum" id="7EUS"/>
<dbReference type="PDBsum" id="7EUT"/>
<dbReference type="PDBsum" id="7EUU"/>
<dbReference type="SMR" id="A0A2G5I8W0"/>
<dbReference type="GeneID" id="35424654"/>
<dbReference type="OrthoDB" id="412788at2759"/>
<dbReference type="Proteomes" id="UP000230605">
    <property type="component" value="Chromosome 1"/>
</dbReference>
<dbReference type="GO" id="GO:0016491">
    <property type="term" value="F:oxidoreductase activity"/>
    <property type="evidence" value="ECO:0007669"/>
    <property type="project" value="UniProtKB-KW"/>
</dbReference>
<dbReference type="InterPro" id="IPR044053">
    <property type="entry name" value="AsaB-like"/>
</dbReference>
<dbReference type="NCBIfam" id="NF041278">
    <property type="entry name" value="CmcJ_NvfI_EfuI"/>
    <property type="match status" value="1"/>
</dbReference>
<dbReference type="PANTHER" id="PTHR34598">
    <property type="entry name" value="BLL6449 PROTEIN"/>
    <property type="match status" value="1"/>
</dbReference>
<dbReference type="PANTHER" id="PTHR34598:SF3">
    <property type="entry name" value="OXIDOREDUCTASE AN1597"/>
    <property type="match status" value="1"/>
</dbReference>
<name>CTB9_CERBT</name>
<protein>
    <recommendedName>
        <fullName evidence="5">Hydroxylase/desaturase CTB9</fullName>
        <ecNumber evidence="7">1.-.-.-</ecNumber>
    </recommendedName>
    <alternativeName>
        <fullName evidence="5">Cercosporin toxin biosynthesis cluster protein 9</fullName>
    </alternativeName>
</protein>